<organism>
    <name type="scientific">Nitratidesulfovibrio vulgaris (strain DP4)</name>
    <name type="common">Desulfovibrio vulgaris</name>
    <dbReference type="NCBI Taxonomy" id="391774"/>
    <lineage>
        <taxon>Bacteria</taxon>
        <taxon>Pseudomonadati</taxon>
        <taxon>Thermodesulfobacteriota</taxon>
        <taxon>Desulfovibrionia</taxon>
        <taxon>Desulfovibrionales</taxon>
        <taxon>Desulfovibrionaceae</taxon>
        <taxon>Nitratidesulfovibrio</taxon>
    </lineage>
</organism>
<evidence type="ECO:0000255" key="1">
    <source>
        <dbReference type="HAMAP-Rule" id="MF_00122"/>
    </source>
</evidence>
<reference key="1">
    <citation type="journal article" date="2009" name="Environ. Microbiol.">
        <title>Contribution of mobile genetic elements to Desulfovibrio vulgaris genome plasticity.</title>
        <authorList>
            <person name="Walker C.B."/>
            <person name="Stolyar S."/>
            <person name="Chivian D."/>
            <person name="Pinel N."/>
            <person name="Gabster J.A."/>
            <person name="Dehal P.S."/>
            <person name="He Z."/>
            <person name="Yang Z.K."/>
            <person name="Yen H.C."/>
            <person name="Zhou J."/>
            <person name="Wall J.D."/>
            <person name="Hazen T.C."/>
            <person name="Arkin A.P."/>
            <person name="Stahl D.A."/>
        </authorList>
    </citation>
    <scope>NUCLEOTIDE SEQUENCE [LARGE SCALE GENOMIC DNA]</scope>
    <source>
        <strain>DP4</strain>
    </source>
</reference>
<name>GATC_NITV4</name>
<accession>A1VFG8</accession>
<protein>
    <recommendedName>
        <fullName evidence="1">Aspartyl/glutamyl-tRNA(Asn/Gln) amidotransferase subunit C</fullName>
        <shortName evidence="1">Asp/Glu-ADT subunit C</shortName>
        <ecNumber evidence="1">6.3.5.-</ecNumber>
    </recommendedName>
</protein>
<proteinExistence type="inferred from homology"/>
<gene>
    <name evidence="1" type="primary">gatC</name>
    <name type="ordered locus">Dvul_2168</name>
</gene>
<sequence length="94" mass="10533">MKISKEQVATIARLARLDLDEARLERFAGQFGDILDYMDMLGAVDTTDVEPLYSPSEHGTVLRADEVHTHCTREELLANAPESDGQFFVVPRIV</sequence>
<dbReference type="EC" id="6.3.5.-" evidence="1"/>
<dbReference type="EMBL" id="CP000527">
    <property type="protein sequence ID" value="ABM29184.1"/>
    <property type="molecule type" value="Genomic_DNA"/>
</dbReference>
<dbReference type="RefSeq" id="WP_010938110.1">
    <property type="nucleotide sequence ID" value="NC_008751.1"/>
</dbReference>
<dbReference type="SMR" id="A1VFG8"/>
<dbReference type="KEGG" id="dvl:Dvul_2168"/>
<dbReference type="HOGENOM" id="CLU_105899_6_1_7"/>
<dbReference type="Proteomes" id="UP000009173">
    <property type="component" value="Chromosome"/>
</dbReference>
<dbReference type="GO" id="GO:0050566">
    <property type="term" value="F:asparaginyl-tRNA synthase (glutamine-hydrolyzing) activity"/>
    <property type="evidence" value="ECO:0007669"/>
    <property type="project" value="RHEA"/>
</dbReference>
<dbReference type="GO" id="GO:0005524">
    <property type="term" value="F:ATP binding"/>
    <property type="evidence" value="ECO:0007669"/>
    <property type="project" value="UniProtKB-KW"/>
</dbReference>
<dbReference type="GO" id="GO:0050567">
    <property type="term" value="F:glutaminyl-tRNA synthase (glutamine-hydrolyzing) activity"/>
    <property type="evidence" value="ECO:0007669"/>
    <property type="project" value="UniProtKB-UniRule"/>
</dbReference>
<dbReference type="GO" id="GO:0070681">
    <property type="term" value="P:glutaminyl-tRNAGln biosynthesis via transamidation"/>
    <property type="evidence" value="ECO:0007669"/>
    <property type="project" value="TreeGrafter"/>
</dbReference>
<dbReference type="GO" id="GO:0006450">
    <property type="term" value="P:regulation of translational fidelity"/>
    <property type="evidence" value="ECO:0007669"/>
    <property type="project" value="InterPro"/>
</dbReference>
<dbReference type="GO" id="GO:0006412">
    <property type="term" value="P:translation"/>
    <property type="evidence" value="ECO:0007669"/>
    <property type="project" value="UniProtKB-UniRule"/>
</dbReference>
<dbReference type="Gene3D" id="1.10.20.60">
    <property type="entry name" value="Glu-tRNAGln amidotransferase C subunit, N-terminal domain"/>
    <property type="match status" value="1"/>
</dbReference>
<dbReference type="HAMAP" id="MF_00122">
    <property type="entry name" value="GatC"/>
    <property type="match status" value="1"/>
</dbReference>
<dbReference type="InterPro" id="IPR036113">
    <property type="entry name" value="Asp/Glu-ADT_sf_sub_c"/>
</dbReference>
<dbReference type="InterPro" id="IPR003837">
    <property type="entry name" value="GatC"/>
</dbReference>
<dbReference type="NCBIfam" id="TIGR00135">
    <property type="entry name" value="gatC"/>
    <property type="match status" value="1"/>
</dbReference>
<dbReference type="PANTHER" id="PTHR15004">
    <property type="entry name" value="GLUTAMYL-TRNA(GLN) AMIDOTRANSFERASE SUBUNIT C, MITOCHONDRIAL"/>
    <property type="match status" value="1"/>
</dbReference>
<dbReference type="PANTHER" id="PTHR15004:SF0">
    <property type="entry name" value="GLUTAMYL-TRNA(GLN) AMIDOTRANSFERASE SUBUNIT C, MITOCHONDRIAL"/>
    <property type="match status" value="1"/>
</dbReference>
<dbReference type="Pfam" id="PF02686">
    <property type="entry name" value="GatC"/>
    <property type="match status" value="1"/>
</dbReference>
<dbReference type="SUPFAM" id="SSF141000">
    <property type="entry name" value="Glu-tRNAGln amidotransferase C subunit"/>
    <property type="match status" value="1"/>
</dbReference>
<feature type="chain" id="PRO_1000016120" description="Aspartyl/glutamyl-tRNA(Asn/Gln) amidotransferase subunit C">
    <location>
        <begin position="1"/>
        <end position="94"/>
    </location>
</feature>
<comment type="function">
    <text evidence="1">Allows the formation of correctly charged Asn-tRNA(Asn) or Gln-tRNA(Gln) through the transamidation of misacylated Asp-tRNA(Asn) or Glu-tRNA(Gln) in organisms which lack either or both of asparaginyl-tRNA or glutaminyl-tRNA synthetases. The reaction takes place in the presence of glutamine and ATP through an activated phospho-Asp-tRNA(Asn) or phospho-Glu-tRNA(Gln).</text>
</comment>
<comment type="catalytic activity">
    <reaction evidence="1">
        <text>L-glutamyl-tRNA(Gln) + L-glutamine + ATP + H2O = L-glutaminyl-tRNA(Gln) + L-glutamate + ADP + phosphate + H(+)</text>
        <dbReference type="Rhea" id="RHEA:17521"/>
        <dbReference type="Rhea" id="RHEA-COMP:9681"/>
        <dbReference type="Rhea" id="RHEA-COMP:9684"/>
        <dbReference type="ChEBI" id="CHEBI:15377"/>
        <dbReference type="ChEBI" id="CHEBI:15378"/>
        <dbReference type="ChEBI" id="CHEBI:29985"/>
        <dbReference type="ChEBI" id="CHEBI:30616"/>
        <dbReference type="ChEBI" id="CHEBI:43474"/>
        <dbReference type="ChEBI" id="CHEBI:58359"/>
        <dbReference type="ChEBI" id="CHEBI:78520"/>
        <dbReference type="ChEBI" id="CHEBI:78521"/>
        <dbReference type="ChEBI" id="CHEBI:456216"/>
    </reaction>
</comment>
<comment type="catalytic activity">
    <reaction evidence="1">
        <text>L-aspartyl-tRNA(Asn) + L-glutamine + ATP + H2O = L-asparaginyl-tRNA(Asn) + L-glutamate + ADP + phosphate + 2 H(+)</text>
        <dbReference type="Rhea" id="RHEA:14513"/>
        <dbReference type="Rhea" id="RHEA-COMP:9674"/>
        <dbReference type="Rhea" id="RHEA-COMP:9677"/>
        <dbReference type="ChEBI" id="CHEBI:15377"/>
        <dbReference type="ChEBI" id="CHEBI:15378"/>
        <dbReference type="ChEBI" id="CHEBI:29985"/>
        <dbReference type="ChEBI" id="CHEBI:30616"/>
        <dbReference type="ChEBI" id="CHEBI:43474"/>
        <dbReference type="ChEBI" id="CHEBI:58359"/>
        <dbReference type="ChEBI" id="CHEBI:78515"/>
        <dbReference type="ChEBI" id="CHEBI:78516"/>
        <dbReference type="ChEBI" id="CHEBI:456216"/>
    </reaction>
</comment>
<comment type="subunit">
    <text evidence="1">Heterotrimer of A, B and C subunits.</text>
</comment>
<comment type="similarity">
    <text evidence="1">Belongs to the GatC family.</text>
</comment>
<keyword id="KW-0067">ATP-binding</keyword>
<keyword id="KW-0436">Ligase</keyword>
<keyword id="KW-0547">Nucleotide-binding</keyword>
<keyword id="KW-0648">Protein biosynthesis</keyword>